<evidence type="ECO:0000255" key="1">
    <source>
        <dbReference type="HAMAP-Rule" id="MF_00463"/>
    </source>
</evidence>
<name>RNFB_HAEIE</name>
<proteinExistence type="inferred from homology"/>
<reference key="1">
    <citation type="journal article" date="2007" name="Genome Biol.">
        <title>Characterization and modeling of the Haemophilus influenzae core and supragenomes based on the complete genomic sequences of Rd and 12 clinical nontypeable strains.</title>
        <authorList>
            <person name="Hogg J.S."/>
            <person name="Hu F.Z."/>
            <person name="Janto B."/>
            <person name="Boissy R."/>
            <person name="Hayes J."/>
            <person name="Keefe R."/>
            <person name="Post J.C."/>
            <person name="Ehrlich G.D."/>
        </authorList>
    </citation>
    <scope>NUCLEOTIDE SEQUENCE [LARGE SCALE GENOMIC DNA]</scope>
    <source>
        <strain>PittEE</strain>
    </source>
</reference>
<dbReference type="EC" id="7.-.-.-" evidence="1"/>
<dbReference type="EMBL" id="CP000671">
    <property type="protein sequence ID" value="ABQ98142.1"/>
    <property type="molecule type" value="Genomic_DNA"/>
</dbReference>
<dbReference type="KEGG" id="hip:CGSHiEE_03615"/>
<dbReference type="HOGENOM" id="CLU_063448_2_0_6"/>
<dbReference type="GO" id="GO:0005886">
    <property type="term" value="C:plasma membrane"/>
    <property type="evidence" value="ECO:0007669"/>
    <property type="project" value="UniProtKB-SubCell"/>
</dbReference>
<dbReference type="GO" id="GO:0051539">
    <property type="term" value="F:4 iron, 4 sulfur cluster binding"/>
    <property type="evidence" value="ECO:0007669"/>
    <property type="project" value="UniProtKB-UniRule"/>
</dbReference>
<dbReference type="GO" id="GO:0009055">
    <property type="term" value="F:electron transfer activity"/>
    <property type="evidence" value="ECO:0007669"/>
    <property type="project" value="InterPro"/>
</dbReference>
<dbReference type="GO" id="GO:0046872">
    <property type="term" value="F:metal ion binding"/>
    <property type="evidence" value="ECO:0007669"/>
    <property type="project" value="UniProtKB-KW"/>
</dbReference>
<dbReference type="GO" id="GO:0022900">
    <property type="term" value="P:electron transport chain"/>
    <property type="evidence" value="ECO:0007669"/>
    <property type="project" value="UniProtKB-UniRule"/>
</dbReference>
<dbReference type="FunFam" id="1.10.15.40:FF:000001">
    <property type="entry name" value="Ion-translocating oxidoreductase complex subunit B"/>
    <property type="match status" value="1"/>
</dbReference>
<dbReference type="Gene3D" id="3.30.70.20">
    <property type="match status" value="2"/>
</dbReference>
<dbReference type="Gene3D" id="1.10.15.40">
    <property type="entry name" value="Electron transport complex subunit B, putative Fe-S cluster"/>
    <property type="match status" value="1"/>
</dbReference>
<dbReference type="HAMAP" id="MF_00463">
    <property type="entry name" value="RsxB_RnfB"/>
    <property type="match status" value="1"/>
</dbReference>
<dbReference type="InterPro" id="IPR007202">
    <property type="entry name" value="4Fe-4S_dom"/>
</dbReference>
<dbReference type="InterPro" id="IPR017896">
    <property type="entry name" value="4Fe4S_Fe-S-bd"/>
</dbReference>
<dbReference type="InterPro" id="IPR017900">
    <property type="entry name" value="4Fe4S_Fe_S_CS"/>
</dbReference>
<dbReference type="InterPro" id="IPR010207">
    <property type="entry name" value="Elect_transpt_cplx_RnfB/RsxB"/>
</dbReference>
<dbReference type="InterPro" id="IPR016463">
    <property type="entry name" value="RnfB/RsxB_Proteobac"/>
</dbReference>
<dbReference type="InterPro" id="IPR050294">
    <property type="entry name" value="RnfB_subfamily"/>
</dbReference>
<dbReference type="NCBIfam" id="NF003475">
    <property type="entry name" value="PRK05113.1"/>
    <property type="match status" value="1"/>
</dbReference>
<dbReference type="NCBIfam" id="TIGR01944">
    <property type="entry name" value="rnfB"/>
    <property type="match status" value="1"/>
</dbReference>
<dbReference type="PANTHER" id="PTHR42859:SF3">
    <property type="entry name" value="ION-TRANSLOCATING OXIDOREDUCTASE COMPLEX SUBUNIT B"/>
    <property type="match status" value="1"/>
</dbReference>
<dbReference type="PANTHER" id="PTHR42859">
    <property type="entry name" value="OXIDOREDUCTASE"/>
    <property type="match status" value="1"/>
</dbReference>
<dbReference type="Pfam" id="PF14697">
    <property type="entry name" value="Fer4_21"/>
    <property type="match status" value="1"/>
</dbReference>
<dbReference type="Pfam" id="PF04060">
    <property type="entry name" value="FeS"/>
    <property type="match status" value="1"/>
</dbReference>
<dbReference type="PIRSF" id="PIRSF005784">
    <property type="entry name" value="Elect_transpt_RnfB"/>
    <property type="match status" value="1"/>
</dbReference>
<dbReference type="SUPFAM" id="SSF54862">
    <property type="entry name" value="4Fe-4S ferredoxins"/>
    <property type="match status" value="1"/>
</dbReference>
<dbReference type="PROSITE" id="PS51656">
    <property type="entry name" value="4FE4S"/>
    <property type="match status" value="1"/>
</dbReference>
<dbReference type="PROSITE" id="PS00198">
    <property type="entry name" value="4FE4S_FER_1"/>
    <property type="match status" value="2"/>
</dbReference>
<dbReference type="PROSITE" id="PS51379">
    <property type="entry name" value="4FE4S_FER_2"/>
    <property type="match status" value="2"/>
</dbReference>
<keyword id="KW-0004">4Fe-4S</keyword>
<keyword id="KW-0997">Cell inner membrane</keyword>
<keyword id="KW-1003">Cell membrane</keyword>
<keyword id="KW-0249">Electron transport</keyword>
<keyword id="KW-0408">Iron</keyword>
<keyword id="KW-0411">Iron-sulfur</keyword>
<keyword id="KW-0472">Membrane</keyword>
<keyword id="KW-0479">Metal-binding</keyword>
<keyword id="KW-0677">Repeat</keyword>
<keyword id="KW-1278">Translocase</keyword>
<keyword id="KW-0813">Transport</keyword>
<comment type="function">
    <text evidence="1">Part of a membrane-bound complex that couples electron transfer with translocation of ions across the membrane.</text>
</comment>
<comment type="cofactor">
    <cofactor evidence="1">
        <name>[4Fe-4S] cluster</name>
        <dbReference type="ChEBI" id="CHEBI:49883"/>
    </cofactor>
    <text evidence="1">Binds 3 [4Fe-4S] clusters.</text>
</comment>
<comment type="subunit">
    <text evidence="1">The complex is composed of six subunits: RnfA, RnfB, RnfC, RnfD, RnfE and RnfG.</text>
</comment>
<comment type="subcellular location">
    <subcellularLocation>
        <location evidence="1">Cell inner membrane</location>
    </subcellularLocation>
</comment>
<comment type="similarity">
    <text evidence="1">Belongs to the 4Fe4S bacterial-type ferredoxin family. RnfB subfamily.</text>
</comment>
<sequence length="193" mass="20762">MTFLFIVITLLALIFGAILGFASIKLKVEADPVVEKIDAILPQSQCGQCGYPGCKPYAEAICNGDEITKCIPGGQTTIVKIAEILGVDVPTMEGIEEPIEKVAFIDENMCIGCTKCIQACPVDAIIGTNKAMHTIIPDLCTGCELCVAPCPTDCILMIPVKKNIDNWDWKFDAKLVIPVMNVDGSEKKLVVGE</sequence>
<accession>A5UBJ1</accession>
<organism>
    <name type="scientific">Haemophilus influenzae (strain PittEE)</name>
    <dbReference type="NCBI Taxonomy" id="374930"/>
    <lineage>
        <taxon>Bacteria</taxon>
        <taxon>Pseudomonadati</taxon>
        <taxon>Pseudomonadota</taxon>
        <taxon>Gammaproteobacteria</taxon>
        <taxon>Pasteurellales</taxon>
        <taxon>Pasteurellaceae</taxon>
        <taxon>Haemophilus</taxon>
    </lineage>
</organism>
<protein>
    <recommendedName>
        <fullName evidence="1">Ion-translocating oxidoreductase complex subunit B</fullName>
        <ecNumber evidence="1">7.-.-.-</ecNumber>
    </recommendedName>
    <alternativeName>
        <fullName evidence="1">Rnf electron transport complex subunit B</fullName>
    </alternativeName>
</protein>
<gene>
    <name evidence="1" type="primary">rnfB</name>
    <name type="ordered locus">CGSHiEE_03615</name>
</gene>
<feature type="chain" id="PRO_1000013647" description="Ion-translocating oxidoreductase complex subunit B">
    <location>
        <begin position="1"/>
        <end position="193"/>
    </location>
</feature>
<feature type="domain" description="4Fe-4S" evidence="1">
    <location>
        <begin position="29"/>
        <end position="87"/>
    </location>
</feature>
<feature type="domain" description="4Fe-4S ferredoxin-type 1" evidence="1">
    <location>
        <begin position="101"/>
        <end position="130"/>
    </location>
</feature>
<feature type="domain" description="4Fe-4S ferredoxin-type 2" evidence="1">
    <location>
        <begin position="131"/>
        <end position="160"/>
    </location>
</feature>
<feature type="region of interest" description="Hydrophobic" evidence="1">
    <location>
        <begin position="1"/>
        <end position="23"/>
    </location>
</feature>
<feature type="binding site" evidence="1">
    <location>
        <position position="46"/>
    </location>
    <ligand>
        <name>[4Fe-4S] cluster</name>
        <dbReference type="ChEBI" id="CHEBI:49883"/>
        <label>1</label>
    </ligand>
</feature>
<feature type="binding site" evidence="1">
    <location>
        <position position="49"/>
    </location>
    <ligand>
        <name>[4Fe-4S] cluster</name>
        <dbReference type="ChEBI" id="CHEBI:49883"/>
        <label>1</label>
    </ligand>
</feature>
<feature type="binding site" evidence="1">
    <location>
        <position position="54"/>
    </location>
    <ligand>
        <name>[4Fe-4S] cluster</name>
        <dbReference type="ChEBI" id="CHEBI:49883"/>
        <label>1</label>
    </ligand>
</feature>
<feature type="binding site" evidence="1">
    <location>
        <position position="70"/>
    </location>
    <ligand>
        <name>[4Fe-4S] cluster</name>
        <dbReference type="ChEBI" id="CHEBI:49883"/>
        <label>1</label>
    </ligand>
</feature>
<feature type="binding site" evidence="1">
    <location>
        <position position="110"/>
    </location>
    <ligand>
        <name>[4Fe-4S] cluster</name>
        <dbReference type="ChEBI" id="CHEBI:49883"/>
        <label>2</label>
    </ligand>
</feature>
<feature type="binding site" evidence="1">
    <location>
        <position position="113"/>
    </location>
    <ligand>
        <name>[4Fe-4S] cluster</name>
        <dbReference type="ChEBI" id="CHEBI:49883"/>
        <label>2</label>
    </ligand>
</feature>
<feature type="binding site" evidence="1">
    <location>
        <position position="116"/>
    </location>
    <ligand>
        <name>[4Fe-4S] cluster</name>
        <dbReference type="ChEBI" id="CHEBI:49883"/>
        <label>2</label>
    </ligand>
</feature>
<feature type="binding site" evidence="1">
    <location>
        <position position="120"/>
    </location>
    <ligand>
        <name>[4Fe-4S] cluster</name>
        <dbReference type="ChEBI" id="CHEBI:49883"/>
        <label>3</label>
    </ligand>
</feature>
<feature type="binding site" evidence="1">
    <location>
        <position position="140"/>
    </location>
    <ligand>
        <name>[4Fe-4S] cluster</name>
        <dbReference type="ChEBI" id="CHEBI:49883"/>
        <label>3</label>
    </ligand>
</feature>
<feature type="binding site" evidence="1">
    <location>
        <position position="143"/>
    </location>
    <ligand>
        <name>[4Fe-4S] cluster</name>
        <dbReference type="ChEBI" id="CHEBI:49883"/>
        <label>3</label>
    </ligand>
</feature>
<feature type="binding site" evidence="1">
    <location>
        <position position="146"/>
    </location>
    <ligand>
        <name>[4Fe-4S] cluster</name>
        <dbReference type="ChEBI" id="CHEBI:49883"/>
        <label>3</label>
    </ligand>
</feature>
<feature type="binding site" evidence="1">
    <location>
        <position position="150"/>
    </location>
    <ligand>
        <name>[4Fe-4S] cluster</name>
        <dbReference type="ChEBI" id="CHEBI:49883"/>
        <label>2</label>
    </ligand>
</feature>